<sequence length="138" mass="15463">MRITFVCTGNTCRSPIAESIAKKMLVDDTINSRGLFAIDGQSVSPESLEVIMEHNLPEPTVAKQFSEKDLNSDLILTMTDMHKQQLVSHYGDNGRIYQLSEYVGEIGDIVDPFGGSIDTYRQTFEQLLYLIGKLRTNS</sequence>
<keyword id="KW-0378">Hydrolase</keyword>
<keyword id="KW-0904">Protein phosphatase</keyword>
<gene>
    <name type="primary">ptpB</name>
    <name type="ordered locus">SH0920</name>
</gene>
<protein>
    <recommendedName>
        <fullName>Low molecular weight protein-tyrosine-phosphatase PtpB</fullName>
        <ecNumber>3.1.3.48</ecNumber>
    </recommendedName>
    <alternativeName>
        <fullName>Phosphotyrosine phosphatase B</fullName>
        <shortName>PTPase B</shortName>
    </alternativeName>
</protein>
<comment type="function">
    <text evidence="1">Dephosphorylates the phosphotyrosine-containing proteins.</text>
</comment>
<comment type="catalytic activity">
    <reaction>
        <text>O-phospho-L-tyrosyl-[protein] + H2O = L-tyrosyl-[protein] + phosphate</text>
        <dbReference type="Rhea" id="RHEA:10684"/>
        <dbReference type="Rhea" id="RHEA-COMP:10136"/>
        <dbReference type="Rhea" id="RHEA-COMP:20101"/>
        <dbReference type="ChEBI" id="CHEBI:15377"/>
        <dbReference type="ChEBI" id="CHEBI:43474"/>
        <dbReference type="ChEBI" id="CHEBI:46858"/>
        <dbReference type="ChEBI" id="CHEBI:61978"/>
        <dbReference type="EC" id="3.1.3.48"/>
    </reaction>
</comment>
<comment type="similarity">
    <text evidence="3">Belongs to the low molecular weight phosphotyrosine protein phosphatase family.</text>
</comment>
<reference key="1">
    <citation type="journal article" date="2005" name="J. Bacteriol.">
        <title>Whole-genome sequencing of Staphylococcus haemolyticus uncovers the extreme plasticity of its genome and the evolution of human-colonizing staphylococcal species.</title>
        <authorList>
            <person name="Takeuchi F."/>
            <person name="Watanabe S."/>
            <person name="Baba T."/>
            <person name="Yuzawa H."/>
            <person name="Ito T."/>
            <person name="Morimoto Y."/>
            <person name="Kuroda M."/>
            <person name="Cui L."/>
            <person name="Takahashi M."/>
            <person name="Ankai A."/>
            <person name="Baba S."/>
            <person name="Fukui S."/>
            <person name="Lee J.C."/>
            <person name="Hiramatsu K."/>
        </authorList>
    </citation>
    <scope>NUCLEOTIDE SEQUENCE [LARGE SCALE GENOMIC DNA]</scope>
    <source>
        <strain>JCSC1435</strain>
    </source>
</reference>
<accession>Q4L7Z6</accession>
<feature type="chain" id="PRO_0000300682" description="Low molecular weight protein-tyrosine-phosphatase PtpB">
    <location>
        <begin position="1"/>
        <end position="138"/>
    </location>
</feature>
<feature type="active site" description="Nucleophile" evidence="2">
    <location>
        <position position="7"/>
    </location>
</feature>
<feature type="active site" evidence="2">
    <location>
        <position position="13"/>
    </location>
</feature>
<feature type="active site" description="Proton donor" evidence="2">
    <location>
        <position position="111"/>
    </location>
</feature>
<evidence type="ECO:0000250" key="1"/>
<evidence type="ECO:0000250" key="2">
    <source>
        <dbReference type="UniProtKB" id="P11064"/>
    </source>
</evidence>
<evidence type="ECO:0000305" key="3"/>
<organism>
    <name type="scientific">Staphylococcus haemolyticus (strain JCSC1435)</name>
    <dbReference type="NCBI Taxonomy" id="279808"/>
    <lineage>
        <taxon>Bacteria</taxon>
        <taxon>Bacillati</taxon>
        <taxon>Bacillota</taxon>
        <taxon>Bacilli</taxon>
        <taxon>Bacillales</taxon>
        <taxon>Staphylococcaceae</taxon>
        <taxon>Staphylococcus</taxon>
    </lineage>
</organism>
<name>PTPB_STAHJ</name>
<dbReference type="EC" id="3.1.3.48"/>
<dbReference type="EMBL" id="AP006716">
    <property type="protein sequence ID" value="BAE04229.1"/>
    <property type="molecule type" value="Genomic_DNA"/>
</dbReference>
<dbReference type="RefSeq" id="WP_011275231.1">
    <property type="nucleotide sequence ID" value="NC_007168.1"/>
</dbReference>
<dbReference type="SMR" id="Q4L7Z6"/>
<dbReference type="KEGG" id="sha:SH0920"/>
<dbReference type="eggNOG" id="COG0394">
    <property type="taxonomic scope" value="Bacteria"/>
</dbReference>
<dbReference type="HOGENOM" id="CLU_071415_1_2_9"/>
<dbReference type="OrthoDB" id="9784339at2"/>
<dbReference type="Proteomes" id="UP000000543">
    <property type="component" value="Chromosome"/>
</dbReference>
<dbReference type="GO" id="GO:0004725">
    <property type="term" value="F:protein tyrosine phosphatase activity"/>
    <property type="evidence" value="ECO:0007669"/>
    <property type="project" value="UniProtKB-EC"/>
</dbReference>
<dbReference type="CDD" id="cd16344">
    <property type="entry name" value="LMWPAP"/>
    <property type="match status" value="1"/>
</dbReference>
<dbReference type="Gene3D" id="3.40.50.2300">
    <property type="match status" value="1"/>
</dbReference>
<dbReference type="InterPro" id="IPR050438">
    <property type="entry name" value="LMW_PTPase"/>
</dbReference>
<dbReference type="InterPro" id="IPR023485">
    <property type="entry name" value="Ptyr_pPase"/>
</dbReference>
<dbReference type="InterPro" id="IPR036196">
    <property type="entry name" value="Ptyr_pPase_sf"/>
</dbReference>
<dbReference type="InterPro" id="IPR017867">
    <property type="entry name" value="Tyr_phospatase_low_mol_wt"/>
</dbReference>
<dbReference type="PANTHER" id="PTHR11717">
    <property type="entry name" value="LOW MOLECULAR WEIGHT PROTEIN TYROSINE PHOSPHATASE"/>
    <property type="match status" value="1"/>
</dbReference>
<dbReference type="PANTHER" id="PTHR11717:SF31">
    <property type="entry name" value="LOW MOLECULAR WEIGHT PROTEIN-TYROSINE-PHOSPHATASE ETP-RELATED"/>
    <property type="match status" value="1"/>
</dbReference>
<dbReference type="Pfam" id="PF01451">
    <property type="entry name" value="LMWPc"/>
    <property type="match status" value="1"/>
</dbReference>
<dbReference type="PRINTS" id="PR00719">
    <property type="entry name" value="LMWPTPASE"/>
</dbReference>
<dbReference type="SMART" id="SM00226">
    <property type="entry name" value="LMWPc"/>
    <property type="match status" value="1"/>
</dbReference>
<dbReference type="SUPFAM" id="SSF52788">
    <property type="entry name" value="Phosphotyrosine protein phosphatases I"/>
    <property type="match status" value="1"/>
</dbReference>
<proteinExistence type="inferred from homology"/>